<geneLocation type="chloroplast"/>
<keyword id="KW-0150">Chloroplast</keyword>
<keyword id="KW-0472">Membrane</keyword>
<keyword id="KW-0520">NAD</keyword>
<keyword id="KW-0521">NADP</keyword>
<keyword id="KW-0934">Plastid</keyword>
<keyword id="KW-0618">Plastoquinone</keyword>
<keyword id="KW-0874">Quinone</keyword>
<keyword id="KW-0793">Thylakoid</keyword>
<keyword id="KW-1278">Translocase</keyword>
<keyword id="KW-0813">Transport</keyword>
<gene>
    <name evidence="1" type="primary">ndhJ</name>
</gene>
<evidence type="ECO:0000255" key="1">
    <source>
        <dbReference type="HAMAP-Rule" id="MF_01357"/>
    </source>
</evidence>
<dbReference type="EC" id="7.1.1.-" evidence="1"/>
<dbReference type="EMBL" id="AP009371">
    <property type="protein sequence ID" value="BAF50200.1"/>
    <property type="molecule type" value="Genomic_DNA"/>
</dbReference>
<dbReference type="RefSeq" id="YP_001123376.1">
    <property type="nucleotide sequence ID" value="NC_009270.1"/>
</dbReference>
<dbReference type="SMR" id="A4QKJ5"/>
<dbReference type="GeneID" id="4961653"/>
<dbReference type="GO" id="GO:0009535">
    <property type="term" value="C:chloroplast thylakoid membrane"/>
    <property type="evidence" value="ECO:0007669"/>
    <property type="project" value="UniProtKB-SubCell"/>
</dbReference>
<dbReference type="GO" id="GO:0008137">
    <property type="term" value="F:NADH dehydrogenase (ubiquinone) activity"/>
    <property type="evidence" value="ECO:0007669"/>
    <property type="project" value="InterPro"/>
</dbReference>
<dbReference type="GO" id="GO:0048038">
    <property type="term" value="F:quinone binding"/>
    <property type="evidence" value="ECO:0007669"/>
    <property type="project" value="UniProtKB-KW"/>
</dbReference>
<dbReference type="GO" id="GO:0019684">
    <property type="term" value="P:photosynthesis, light reaction"/>
    <property type="evidence" value="ECO:0007669"/>
    <property type="project" value="UniProtKB-UniRule"/>
</dbReference>
<dbReference type="FunFam" id="3.30.460.80:FF:000004">
    <property type="entry name" value="NAD(P)H-quinone oxidoreductase subunit J, chloroplastic"/>
    <property type="match status" value="1"/>
</dbReference>
<dbReference type="Gene3D" id="3.30.460.80">
    <property type="entry name" value="NADH:ubiquinone oxidoreductase, 30kDa subunit"/>
    <property type="match status" value="1"/>
</dbReference>
<dbReference type="HAMAP" id="MF_01357">
    <property type="entry name" value="NDH1_NuoC"/>
    <property type="match status" value="1"/>
</dbReference>
<dbReference type="InterPro" id="IPR010218">
    <property type="entry name" value="NADH_DH_suC"/>
</dbReference>
<dbReference type="InterPro" id="IPR037232">
    <property type="entry name" value="NADH_quin_OxRdtase_su_C/D-like"/>
</dbReference>
<dbReference type="InterPro" id="IPR001268">
    <property type="entry name" value="NADH_UbQ_OxRdtase_30kDa_su"/>
</dbReference>
<dbReference type="InterPro" id="IPR020396">
    <property type="entry name" value="NADH_UbQ_OxRdtase_CS"/>
</dbReference>
<dbReference type="NCBIfam" id="NF009141">
    <property type="entry name" value="PRK12494.1"/>
    <property type="match status" value="1"/>
</dbReference>
<dbReference type="PANTHER" id="PTHR10884:SF14">
    <property type="entry name" value="NADH DEHYDROGENASE [UBIQUINONE] IRON-SULFUR PROTEIN 3, MITOCHONDRIAL"/>
    <property type="match status" value="1"/>
</dbReference>
<dbReference type="PANTHER" id="PTHR10884">
    <property type="entry name" value="NADH DEHYDROGENASE UBIQUINONE IRON-SULFUR PROTEIN 3"/>
    <property type="match status" value="1"/>
</dbReference>
<dbReference type="Pfam" id="PF00329">
    <property type="entry name" value="Complex1_30kDa"/>
    <property type="match status" value="1"/>
</dbReference>
<dbReference type="SUPFAM" id="SSF143243">
    <property type="entry name" value="Nqo5-like"/>
    <property type="match status" value="1"/>
</dbReference>
<dbReference type="PROSITE" id="PS00542">
    <property type="entry name" value="COMPLEX1_30K"/>
    <property type="match status" value="1"/>
</dbReference>
<accession>A4QKJ5</accession>
<feature type="chain" id="PRO_0000358248" description="NAD(P)H-quinone oxidoreductase subunit J, chloroplastic">
    <location>
        <begin position="1"/>
        <end position="158"/>
    </location>
</feature>
<proteinExistence type="inferred from homology"/>
<comment type="function">
    <text evidence="1">NDH shuttles electrons from NAD(P)H:plastoquinone, via FMN and iron-sulfur (Fe-S) centers, to quinones in the photosynthetic chain and possibly in a chloroplast respiratory chain. The immediate electron acceptor for the enzyme in this species is believed to be plastoquinone. Couples the redox reaction to proton translocation, and thus conserves the redox energy in a proton gradient.</text>
</comment>
<comment type="catalytic activity">
    <reaction evidence="1">
        <text>a plastoquinone + NADH + (n+1) H(+)(in) = a plastoquinol + NAD(+) + n H(+)(out)</text>
        <dbReference type="Rhea" id="RHEA:42608"/>
        <dbReference type="Rhea" id="RHEA-COMP:9561"/>
        <dbReference type="Rhea" id="RHEA-COMP:9562"/>
        <dbReference type="ChEBI" id="CHEBI:15378"/>
        <dbReference type="ChEBI" id="CHEBI:17757"/>
        <dbReference type="ChEBI" id="CHEBI:57540"/>
        <dbReference type="ChEBI" id="CHEBI:57945"/>
        <dbReference type="ChEBI" id="CHEBI:62192"/>
    </reaction>
</comment>
<comment type="catalytic activity">
    <reaction evidence="1">
        <text>a plastoquinone + NADPH + (n+1) H(+)(in) = a plastoquinol + NADP(+) + n H(+)(out)</text>
        <dbReference type="Rhea" id="RHEA:42612"/>
        <dbReference type="Rhea" id="RHEA-COMP:9561"/>
        <dbReference type="Rhea" id="RHEA-COMP:9562"/>
        <dbReference type="ChEBI" id="CHEBI:15378"/>
        <dbReference type="ChEBI" id="CHEBI:17757"/>
        <dbReference type="ChEBI" id="CHEBI:57783"/>
        <dbReference type="ChEBI" id="CHEBI:58349"/>
        <dbReference type="ChEBI" id="CHEBI:62192"/>
    </reaction>
</comment>
<comment type="subunit">
    <text evidence="1">NDH is composed of at least 16 different subunits, 5 of which are encoded in the nucleus.</text>
</comment>
<comment type="subcellular location">
    <subcellularLocation>
        <location evidence="1">Plastid</location>
        <location evidence="1">Chloroplast thylakoid membrane</location>
        <topology evidence="1">Peripheral membrane protein</topology>
        <orientation evidence="1">Stromal side</orientation>
    </subcellularLocation>
</comment>
<comment type="similarity">
    <text evidence="1">Belongs to the complex I 30 kDa subunit family.</text>
</comment>
<sequence>MQGTLSVWLAKRGLIHRSLGFDYQGIETLQIKPEDWHSIAVILYVYGYNYLRSQCAYDVAPGGLLASVYHLTRIEYGVNPAEEVCIKVFTHRSNPRIPSVFWVWKSTDFQERESYDMLGITYDSHPRLKRILMPESWIGWPLRKDYIAPNFYEIQDAY</sequence>
<protein>
    <recommendedName>
        <fullName evidence="1">NAD(P)H-quinone oxidoreductase subunit J, chloroplastic</fullName>
        <ecNumber evidence="1">7.1.1.-</ecNumber>
    </recommendedName>
    <alternativeName>
        <fullName>NAD(P)H dehydrogenase subunit J</fullName>
    </alternativeName>
    <alternativeName>
        <fullName evidence="1">NADH-plastoquinone oxidoreductase subunit J</fullName>
    </alternativeName>
</protein>
<organism>
    <name type="scientific">Capsella bursa-pastoris</name>
    <name type="common">Shepherd's purse</name>
    <name type="synonym">Thlaspi bursa-pastoris</name>
    <dbReference type="NCBI Taxonomy" id="3719"/>
    <lineage>
        <taxon>Eukaryota</taxon>
        <taxon>Viridiplantae</taxon>
        <taxon>Streptophyta</taxon>
        <taxon>Embryophyta</taxon>
        <taxon>Tracheophyta</taxon>
        <taxon>Spermatophyta</taxon>
        <taxon>Magnoliopsida</taxon>
        <taxon>eudicotyledons</taxon>
        <taxon>Gunneridae</taxon>
        <taxon>Pentapetalae</taxon>
        <taxon>rosids</taxon>
        <taxon>malvids</taxon>
        <taxon>Brassicales</taxon>
        <taxon>Brassicaceae</taxon>
        <taxon>Camelineae</taxon>
        <taxon>Capsella</taxon>
    </lineage>
</organism>
<reference key="1">
    <citation type="submission" date="2007-03" db="EMBL/GenBank/DDBJ databases">
        <title>Sequencing analysis of Capsella bursa-pastoris JO22 chloroplast DNA.</title>
        <authorList>
            <person name="Hosouchi T."/>
            <person name="Tsuruoka H."/>
            <person name="Kotani H."/>
        </authorList>
    </citation>
    <scope>NUCLEOTIDE SEQUENCE [LARGE SCALE GENOMIC DNA]</scope>
</reference>
<name>NDHJ_CAPBU</name>